<feature type="chain" id="PRO_0000281554" description="Zinc import ATP-binding protein ZnuC">
    <location>
        <begin position="1"/>
        <end position="251"/>
    </location>
</feature>
<feature type="domain" description="ABC transporter" evidence="1">
    <location>
        <begin position="5"/>
        <end position="220"/>
    </location>
</feature>
<feature type="binding site" evidence="1">
    <location>
        <begin position="37"/>
        <end position="44"/>
    </location>
    <ligand>
        <name>ATP</name>
        <dbReference type="ChEBI" id="CHEBI:30616"/>
    </ligand>
</feature>
<dbReference type="EC" id="7.2.2.20" evidence="1"/>
<dbReference type="EMBL" id="CP000038">
    <property type="protein sequence ID" value="AAZ87996.1"/>
    <property type="molecule type" value="Genomic_DNA"/>
</dbReference>
<dbReference type="RefSeq" id="WP_000202996.1">
    <property type="nucleotide sequence ID" value="NC_007384.1"/>
</dbReference>
<dbReference type="SMR" id="Q3Z2L6"/>
<dbReference type="GeneID" id="93776132"/>
<dbReference type="KEGG" id="ssn:SSON_1283"/>
<dbReference type="HOGENOM" id="CLU_000604_1_11_6"/>
<dbReference type="Proteomes" id="UP000002529">
    <property type="component" value="Chromosome"/>
</dbReference>
<dbReference type="GO" id="GO:0005886">
    <property type="term" value="C:plasma membrane"/>
    <property type="evidence" value="ECO:0007669"/>
    <property type="project" value="UniProtKB-SubCell"/>
</dbReference>
<dbReference type="GO" id="GO:0015633">
    <property type="term" value="F:ABC-type zinc transporter activity"/>
    <property type="evidence" value="ECO:0007669"/>
    <property type="project" value="UniProtKB-EC"/>
</dbReference>
<dbReference type="GO" id="GO:0005524">
    <property type="term" value="F:ATP binding"/>
    <property type="evidence" value="ECO:0007669"/>
    <property type="project" value="UniProtKB-KW"/>
</dbReference>
<dbReference type="GO" id="GO:0016887">
    <property type="term" value="F:ATP hydrolysis activity"/>
    <property type="evidence" value="ECO:0007669"/>
    <property type="project" value="InterPro"/>
</dbReference>
<dbReference type="GO" id="GO:0010043">
    <property type="term" value="P:response to zinc ion"/>
    <property type="evidence" value="ECO:0007669"/>
    <property type="project" value="TreeGrafter"/>
</dbReference>
<dbReference type="CDD" id="cd03235">
    <property type="entry name" value="ABC_Metallic_Cations"/>
    <property type="match status" value="1"/>
</dbReference>
<dbReference type="FunFam" id="3.40.50.300:FF:000392">
    <property type="entry name" value="Zinc import ATP-binding protein ZnuC"/>
    <property type="match status" value="1"/>
</dbReference>
<dbReference type="Gene3D" id="3.40.50.300">
    <property type="entry name" value="P-loop containing nucleotide triphosphate hydrolases"/>
    <property type="match status" value="1"/>
</dbReference>
<dbReference type="InterPro" id="IPR003593">
    <property type="entry name" value="AAA+_ATPase"/>
</dbReference>
<dbReference type="InterPro" id="IPR003439">
    <property type="entry name" value="ABC_transporter-like_ATP-bd"/>
</dbReference>
<dbReference type="InterPro" id="IPR050153">
    <property type="entry name" value="Metal_Ion_Import_ABC"/>
</dbReference>
<dbReference type="InterPro" id="IPR027417">
    <property type="entry name" value="P-loop_NTPase"/>
</dbReference>
<dbReference type="NCBIfam" id="NF007090">
    <property type="entry name" value="PRK09544.1"/>
    <property type="match status" value="1"/>
</dbReference>
<dbReference type="PANTHER" id="PTHR42734">
    <property type="entry name" value="METAL TRANSPORT SYSTEM ATP-BINDING PROTEIN TM_0124-RELATED"/>
    <property type="match status" value="1"/>
</dbReference>
<dbReference type="PANTHER" id="PTHR42734:SF9">
    <property type="entry name" value="ZINC IMPORT ATP-BINDING PROTEIN ZNUC"/>
    <property type="match status" value="1"/>
</dbReference>
<dbReference type="Pfam" id="PF00005">
    <property type="entry name" value="ABC_tran"/>
    <property type="match status" value="1"/>
</dbReference>
<dbReference type="SMART" id="SM00382">
    <property type="entry name" value="AAA"/>
    <property type="match status" value="1"/>
</dbReference>
<dbReference type="SUPFAM" id="SSF52540">
    <property type="entry name" value="P-loop containing nucleoside triphosphate hydrolases"/>
    <property type="match status" value="1"/>
</dbReference>
<dbReference type="PROSITE" id="PS50893">
    <property type="entry name" value="ABC_TRANSPORTER_2"/>
    <property type="match status" value="1"/>
</dbReference>
<dbReference type="PROSITE" id="PS51298">
    <property type="entry name" value="ZNUC"/>
    <property type="match status" value="1"/>
</dbReference>
<sequence length="251" mass="27867">MTSLVSLENVSVSFGQRRVLSDVSLELKPGKILTLLGPNGAGKSTLVRVVLGLVTPDEGVIKRNGKLRIGYVPQKLYLDTTLPLTVNRFLRLRPGTHKEDILPALKRVQAGHLINAPMQKLSGGETQRVLLARALLNRPQLLVLDEPTQGVDVNGQVALYDLIDQLRRELDCGVLMVSHDLHLVMAKTDEVLCLNHHICCSGTPEVVSLHPEFISMFGPRGAEQLGIYRHHHNHRHDLQGRIVLRRGNDRS</sequence>
<keyword id="KW-0067">ATP-binding</keyword>
<keyword id="KW-0997">Cell inner membrane</keyword>
<keyword id="KW-1003">Cell membrane</keyword>
<keyword id="KW-0406">Ion transport</keyword>
<keyword id="KW-0472">Membrane</keyword>
<keyword id="KW-0547">Nucleotide-binding</keyword>
<keyword id="KW-1185">Reference proteome</keyword>
<keyword id="KW-1278">Translocase</keyword>
<keyword id="KW-0813">Transport</keyword>
<keyword id="KW-0862">Zinc</keyword>
<keyword id="KW-0864">Zinc transport</keyword>
<protein>
    <recommendedName>
        <fullName evidence="1">Zinc import ATP-binding protein ZnuC</fullName>
        <ecNumber evidence="1">7.2.2.20</ecNumber>
    </recommendedName>
</protein>
<organism>
    <name type="scientific">Shigella sonnei (strain Ss046)</name>
    <dbReference type="NCBI Taxonomy" id="300269"/>
    <lineage>
        <taxon>Bacteria</taxon>
        <taxon>Pseudomonadati</taxon>
        <taxon>Pseudomonadota</taxon>
        <taxon>Gammaproteobacteria</taxon>
        <taxon>Enterobacterales</taxon>
        <taxon>Enterobacteriaceae</taxon>
        <taxon>Shigella</taxon>
    </lineage>
</organism>
<reference key="1">
    <citation type="journal article" date="2005" name="Nucleic Acids Res.">
        <title>Genome dynamics and diversity of Shigella species, the etiologic agents of bacillary dysentery.</title>
        <authorList>
            <person name="Yang F."/>
            <person name="Yang J."/>
            <person name="Zhang X."/>
            <person name="Chen L."/>
            <person name="Jiang Y."/>
            <person name="Yan Y."/>
            <person name="Tang X."/>
            <person name="Wang J."/>
            <person name="Xiong Z."/>
            <person name="Dong J."/>
            <person name="Xue Y."/>
            <person name="Zhu Y."/>
            <person name="Xu X."/>
            <person name="Sun L."/>
            <person name="Chen S."/>
            <person name="Nie H."/>
            <person name="Peng J."/>
            <person name="Xu J."/>
            <person name="Wang Y."/>
            <person name="Yuan Z."/>
            <person name="Wen Y."/>
            <person name="Yao Z."/>
            <person name="Shen Y."/>
            <person name="Qiang B."/>
            <person name="Hou Y."/>
            <person name="Yu J."/>
            <person name="Jin Q."/>
        </authorList>
    </citation>
    <scope>NUCLEOTIDE SEQUENCE [LARGE SCALE GENOMIC DNA]</scope>
    <source>
        <strain>Ss046</strain>
    </source>
</reference>
<evidence type="ECO:0000255" key="1">
    <source>
        <dbReference type="HAMAP-Rule" id="MF_01725"/>
    </source>
</evidence>
<proteinExistence type="inferred from homology"/>
<name>ZNUC_SHISS</name>
<comment type="function">
    <text evidence="1">Part of the ABC transporter complex ZnuABC involved in zinc import. Responsible for energy coupling to the transport system.</text>
</comment>
<comment type="catalytic activity">
    <reaction evidence="1">
        <text>Zn(2+)(out) + ATP(in) + H2O(in) = Zn(2+)(in) + ADP(in) + phosphate(in) + H(+)(in)</text>
        <dbReference type="Rhea" id="RHEA:29795"/>
        <dbReference type="ChEBI" id="CHEBI:15377"/>
        <dbReference type="ChEBI" id="CHEBI:15378"/>
        <dbReference type="ChEBI" id="CHEBI:29105"/>
        <dbReference type="ChEBI" id="CHEBI:30616"/>
        <dbReference type="ChEBI" id="CHEBI:43474"/>
        <dbReference type="ChEBI" id="CHEBI:456216"/>
        <dbReference type="EC" id="7.2.2.20"/>
    </reaction>
</comment>
<comment type="subunit">
    <text evidence="1">The complex is composed of two ATP-binding proteins (ZnuC), two transmembrane proteins (ZnuB) and a solute-binding protein (ZnuA).</text>
</comment>
<comment type="subcellular location">
    <subcellularLocation>
        <location evidence="1">Cell inner membrane</location>
        <topology evidence="1">Peripheral membrane protein</topology>
    </subcellularLocation>
</comment>
<comment type="similarity">
    <text evidence="1">Belongs to the ABC transporter superfamily. Zinc importer (TC 3.A.1.15.5) family.</text>
</comment>
<gene>
    <name evidence="1" type="primary">znuC</name>
    <name type="ordered locus">SSON_1283</name>
</gene>
<accession>Q3Z2L6</accession>